<feature type="chain" id="PRO_0000316963" description="SLAIN motif-containing protein 1">
    <location>
        <begin position="1"/>
        <end position="579"/>
    </location>
</feature>
<feature type="region of interest" description="Disordered" evidence="3">
    <location>
        <begin position="1"/>
        <end position="21"/>
    </location>
</feature>
<feature type="region of interest" description="Disordered" evidence="3">
    <location>
        <begin position="60"/>
        <end position="95"/>
    </location>
</feature>
<feature type="region of interest" description="Disordered" evidence="3">
    <location>
        <begin position="135"/>
        <end position="162"/>
    </location>
</feature>
<feature type="region of interest" description="Disordered" evidence="3">
    <location>
        <begin position="233"/>
        <end position="258"/>
    </location>
</feature>
<feature type="region of interest" description="Disordered" evidence="3">
    <location>
        <begin position="289"/>
        <end position="313"/>
    </location>
</feature>
<feature type="region of interest" description="Disordered" evidence="3">
    <location>
        <begin position="347"/>
        <end position="454"/>
    </location>
</feature>
<feature type="region of interest" description="Disordered" evidence="3">
    <location>
        <begin position="479"/>
        <end position="516"/>
    </location>
</feature>
<feature type="coiled-coil region" evidence="2">
    <location>
        <begin position="21"/>
        <end position="56"/>
    </location>
</feature>
<feature type="compositionally biased region" description="Low complexity" evidence="3">
    <location>
        <begin position="9"/>
        <end position="21"/>
    </location>
</feature>
<feature type="compositionally biased region" description="Pro residues" evidence="3">
    <location>
        <begin position="63"/>
        <end position="73"/>
    </location>
</feature>
<feature type="compositionally biased region" description="Low complexity" evidence="3">
    <location>
        <begin position="141"/>
        <end position="154"/>
    </location>
</feature>
<feature type="compositionally biased region" description="Polar residues" evidence="3">
    <location>
        <begin position="233"/>
        <end position="243"/>
    </location>
</feature>
<feature type="compositionally biased region" description="Low complexity" evidence="3">
    <location>
        <begin position="244"/>
        <end position="253"/>
    </location>
</feature>
<feature type="compositionally biased region" description="Low complexity" evidence="3">
    <location>
        <begin position="289"/>
        <end position="305"/>
    </location>
</feature>
<feature type="compositionally biased region" description="Polar residues" evidence="3">
    <location>
        <begin position="362"/>
        <end position="373"/>
    </location>
</feature>
<feature type="compositionally biased region" description="Low complexity" evidence="3">
    <location>
        <begin position="374"/>
        <end position="390"/>
    </location>
</feature>
<feature type="compositionally biased region" description="Polar residues" evidence="3">
    <location>
        <begin position="412"/>
        <end position="432"/>
    </location>
</feature>
<feature type="compositionally biased region" description="Polar residues" evidence="3">
    <location>
        <begin position="502"/>
        <end position="516"/>
    </location>
</feature>
<feature type="modified residue" description="Phosphoserine" evidence="1">
    <location>
        <position position="241"/>
    </location>
</feature>
<feature type="modified residue" description="Asymmetric dimethylarginine" evidence="9">
    <location>
        <position position="469"/>
    </location>
</feature>
<feature type="modified residue" description="Asymmetric dimethylarginine" evidence="9">
    <location>
        <position position="554"/>
    </location>
</feature>
<feature type="splice variant" id="VSP_030833" description="In isoform 2." evidence="7">
    <location>
        <begin position="1"/>
        <end position="261"/>
    </location>
</feature>
<evidence type="ECO:0000250" key="1">
    <source>
        <dbReference type="UniProtKB" id="Q8ND83"/>
    </source>
</evidence>
<evidence type="ECO:0000255" key="2"/>
<evidence type="ECO:0000256" key="3">
    <source>
        <dbReference type="SAM" id="MobiDB-lite"/>
    </source>
</evidence>
<evidence type="ECO:0000269" key="4">
    <source>
    </source>
</evidence>
<evidence type="ECO:0000269" key="5">
    <source>
    </source>
</evidence>
<evidence type="ECO:0000269" key="6">
    <source>
    </source>
</evidence>
<evidence type="ECO:0000303" key="7">
    <source>
    </source>
</evidence>
<evidence type="ECO:0000305" key="8"/>
<evidence type="ECO:0007744" key="9">
    <source>
    </source>
</evidence>
<sequence>MMAEQVKCASPVAASGAGPGPVVNAELEVKKLQELVRKLEKQNEQLRSRAASAAAAPHLLLLQPPPPSAPPPAGACSPLATHRAPASTTSPGPGALGPAFPGTYCLPSPAPSLLCSLQPADAPFVYSKPAAGFFGGGGSPEPGTAGTPPGEAATPPLPPPTLLDEVEPLDLESLAAWSEEDDYTWLYVGSSKTFTSPEKSPSPLQWCRHVLDNPTPEMEAARRSLRFRLEQGYTSRGSPLSPQSSIDSELSTSELEDDSISMGYKLQDLTDVQIMARLQEESLRQDYASTSASVSRNSSSVSLSSGKKGTCSDQEYDRYSLEDEEEFDHLPPPQPRLPRCSPFQRGIPHSQTFSSIRDCRRSPSTQYFPSNNFQQPQYYPPQAQTADQQPNRTNGDKLRRSMPNLARMPSTAAASSNLSSPVTVRSSQSFDSSLHGAGSGVSRVPSCIPSPGQIQHRVHSVGHFPVPIRQPLKATAYVSPTVQGSSSSGSSGSSGGSGSGMPLSNGTQLYSTTGIPTPNKAAASGILGRSALPRPSLAINGSNLPRSKIAQPVRSFLQPPKPLSSLSTLRDGNWRDGCY</sequence>
<gene>
    <name type="primary">Slain1</name>
</gene>
<organism>
    <name type="scientific">Mus musculus</name>
    <name type="common">Mouse</name>
    <dbReference type="NCBI Taxonomy" id="10090"/>
    <lineage>
        <taxon>Eukaryota</taxon>
        <taxon>Metazoa</taxon>
        <taxon>Chordata</taxon>
        <taxon>Craniata</taxon>
        <taxon>Vertebrata</taxon>
        <taxon>Euteleostomi</taxon>
        <taxon>Mammalia</taxon>
        <taxon>Eutheria</taxon>
        <taxon>Euarchontoglires</taxon>
        <taxon>Glires</taxon>
        <taxon>Rodentia</taxon>
        <taxon>Myomorpha</taxon>
        <taxon>Muroidea</taxon>
        <taxon>Muridae</taxon>
        <taxon>Murinae</taxon>
        <taxon>Mus</taxon>
        <taxon>Mus</taxon>
    </lineage>
</organism>
<keyword id="KW-0025">Alternative splicing</keyword>
<keyword id="KW-0175">Coiled coil</keyword>
<keyword id="KW-0963">Cytoplasm</keyword>
<keyword id="KW-0206">Cytoskeleton</keyword>
<keyword id="KW-0488">Methylation</keyword>
<keyword id="KW-0597">Phosphoprotein</keyword>
<keyword id="KW-1185">Reference proteome</keyword>
<protein>
    <recommendedName>
        <fullName>SLAIN motif-containing protein 1</fullName>
    </recommendedName>
</protein>
<accession>Q68FF7</accession>
<accession>Q8R3I6</accession>
<name>SLAI1_MOUSE</name>
<reference key="1">
    <citation type="journal article" date="2004" name="Genome Res.">
        <title>The status, quality, and expansion of the NIH full-length cDNA project: the Mammalian Gene Collection (MGC).</title>
        <authorList>
            <consortium name="The MGC Project Team"/>
        </authorList>
    </citation>
    <scope>NUCLEOTIDE SEQUENCE [LARGE SCALE MRNA] (ISOFORMS 1 AND 2)</scope>
    <source>
        <strain>C57BL/6J</strain>
        <strain>FVB/N-3</strain>
        <tissue>Brain</tissue>
        <tissue>Mammary tumor</tissue>
    </source>
</reference>
<reference key="2">
    <citation type="journal article" date="2006" name="Dev. Biol.">
        <title>Transcriptional profiling of mouse and human ES cells identifies SLAIN1, a novel stem cell gene.</title>
        <authorList>
            <person name="Hirst C.E."/>
            <person name="Ng E.S."/>
            <person name="Azzola L."/>
            <person name="Voss A.K."/>
            <person name="Thomas T."/>
            <person name="Stanley E.G."/>
            <person name="Elefanty A.G."/>
        </authorList>
    </citation>
    <scope>IDENTIFICATION</scope>
    <scope>DEVELOPMENTAL STAGE</scope>
    <scope>TISSUE SPECIFICITY</scope>
</reference>
<reference key="3">
    <citation type="journal article" date="2010" name="Int. J. Dev. Biol.">
        <title>Expression from a betageo gene trap in the Slain1 gene locus is predominantly associated with the developing nervous system.</title>
        <authorList>
            <person name="Hirst C.E."/>
            <person name="Lim S.M."/>
            <person name="Pereira L.A."/>
            <person name="Mayberry R.A."/>
            <person name="Stanley E.G."/>
            <person name="Elefanty A.G."/>
        </authorList>
    </citation>
    <scope>TISSUE SPECIFICITY</scope>
    <scope>DEVELOPMENTAL STAGE</scope>
</reference>
<reference key="4">
    <citation type="journal article" date="2011" name="J. Cell Biol.">
        <title>SLAIN2 links microtubule plus end-tracking proteins and controls microtubule growth in interphase.</title>
        <authorList>
            <person name="van der Vaart B."/>
            <person name="Manatschal C."/>
            <person name="Grigoriev I."/>
            <person name="Olieric V."/>
            <person name="Gouveia S.M."/>
            <person name="Bjelic S."/>
            <person name="Demmers J."/>
            <person name="Vorobjev I."/>
            <person name="Hoogenraad C.C."/>
            <person name="Steinmetz M.O."/>
            <person name="Akhmanova A."/>
        </authorList>
    </citation>
    <scope>FUNCTION</scope>
    <scope>INTERACTION WITH MAPRE1; MAPRE2; MAPRE3 AND CKAP5</scope>
    <scope>SUBCELLULAR LOCATION</scope>
</reference>
<reference key="5">
    <citation type="journal article" date="2014" name="Mol. Cell. Proteomics">
        <title>Immunoaffinity enrichment and mass spectrometry analysis of protein methylation.</title>
        <authorList>
            <person name="Guo A."/>
            <person name="Gu H."/>
            <person name="Zhou J."/>
            <person name="Mulhern D."/>
            <person name="Wang Y."/>
            <person name="Lee K.A."/>
            <person name="Yang V."/>
            <person name="Aguiar M."/>
            <person name="Kornhauser J."/>
            <person name="Jia X."/>
            <person name="Ren J."/>
            <person name="Beausoleil S.A."/>
            <person name="Silva J.C."/>
            <person name="Vemulapalli V."/>
            <person name="Bedford M.T."/>
            <person name="Comb M.J."/>
        </authorList>
    </citation>
    <scope>METHYLATION [LARGE SCALE ANALYSIS] AT ARG-469 AND ARG-554</scope>
    <scope>IDENTIFICATION BY MASS SPECTROMETRY [LARGE SCALE ANALYSIS]</scope>
    <source>
        <tissue>Brain</tissue>
        <tissue>Embryo</tissue>
    </source>
</reference>
<dbReference type="EMBL" id="BC025223">
    <property type="protein sequence ID" value="AAH25223.1"/>
    <property type="molecule type" value="mRNA"/>
</dbReference>
<dbReference type="EMBL" id="BC079866">
    <property type="protein sequence ID" value="AAH79866.1"/>
    <property type="molecule type" value="mRNA"/>
</dbReference>
<dbReference type="CCDS" id="CCDS27316.1">
    <molecule id="Q68FF7-1"/>
</dbReference>
<dbReference type="RefSeq" id="NP_932131.2">
    <molecule id="Q68FF7-1"/>
    <property type="nucleotide sequence ID" value="NM_198014.3"/>
</dbReference>
<dbReference type="SMR" id="Q68FF7"/>
<dbReference type="BioGRID" id="222856">
    <property type="interactions" value="15"/>
</dbReference>
<dbReference type="FunCoup" id="Q68FF7">
    <property type="interactions" value="375"/>
</dbReference>
<dbReference type="IntAct" id="Q68FF7">
    <property type="interactions" value="15"/>
</dbReference>
<dbReference type="STRING" id="10090.ENSMUSP00000070592"/>
<dbReference type="GlyGen" id="Q68FF7">
    <property type="glycosylation" value="6 sites, 1 N-linked glycan (1 site), 1 O-linked glycan (4 sites)"/>
</dbReference>
<dbReference type="iPTMnet" id="Q68FF7"/>
<dbReference type="PhosphoSitePlus" id="Q68FF7"/>
<dbReference type="jPOST" id="Q68FF7"/>
<dbReference type="PaxDb" id="10090-ENSMUSP00000070592"/>
<dbReference type="ProteomicsDB" id="261190">
    <molecule id="Q68FF7-1"/>
</dbReference>
<dbReference type="ProteomicsDB" id="261191">
    <molecule id="Q68FF7-2"/>
</dbReference>
<dbReference type="Antibodypedia" id="24633">
    <property type="antibodies" value="146 antibodies from 27 providers"/>
</dbReference>
<dbReference type="DNASU" id="105439"/>
<dbReference type="Ensembl" id="ENSMUST00000069443.14">
    <molecule id="Q68FF7-1"/>
    <property type="protein sequence ID" value="ENSMUSP00000070592.8"/>
    <property type="gene ID" value="ENSMUSG00000055717.14"/>
</dbReference>
<dbReference type="GeneID" id="105439"/>
<dbReference type="KEGG" id="mmu:105439"/>
<dbReference type="UCSC" id="uc007uws.1">
    <molecule id="Q68FF7-1"/>
    <property type="organism name" value="mouse"/>
</dbReference>
<dbReference type="AGR" id="MGI:2145578"/>
<dbReference type="CTD" id="122060"/>
<dbReference type="MGI" id="MGI:2145578">
    <property type="gene designation" value="Slain1"/>
</dbReference>
<dbReference type="VEuPathDB" id="HostDB:ENSMUSG00000055717"/>
<dbReference type="eggNOG" id="ENOG502QVWF">
    <property type="taxonomic scope" value="Eukaryota"/>
</dbReference>
<dbReference type="GeneTree" id="ENSGT00390000017860"/>
<dbReference type="InParanoid" id="Q68FF7"/>
<dbReference type="OMA" id="TPERTGC"/>
<dbReference type="OrthoDB" id="8819875at2759"/>
<dbReference type="PhylomeDB" id="Q68FF7"/>
<dbReference type="TreeFam" id="TF331616"/>
<dbReference type="BioGRID-ORCS" id="105439">
    <property type="hits" value="2 hits in 76 CRISPR screens"/>
</dbReference>
<dbReference type="ChiTaRS" id="Slain1">
    <property type="organism name" value="mouse"/>
</dbReference>
<dbReference type="PRO" id="PR:Q68FF7"/>
<dbReference type="Proteomes" id="UP000000589">
    <property type="component" value="Chromosome 14"/>
</dbReference>
<dbReference type="RNAct" id="Q68FF7">
    <property type="molecule type" value="protein"/>
</dbReference>
<dbReference type="Bgee" id="ENSMUSG00000055717">
    <property type="expression patterns" value="Expressed in animal zygote and 214 other cell types or tissues"/>
</dbReference>
<dbReference type="ExpressionAtlas" id="Q68FF7">
    <property type="expression patterns" value="baseline and differential"/>
</dbReference>
<dbReference type="GO" id="GO:0005737">
    <property type="term" value="C:cytoplasm"/>
    <property type="evidence" value="ECO:0007669"/>
    <property type="project" value="UniProtKB-KW"/>
</dbReference>
<dbReference type="GO" id="GO:0005856">
    <property type="term" value="C:cytoskeleton"/>
    <property type="evidence" value="ECO:0007669"/>
    <property type="project" value="UniProtKB-SubCell"/>
</dbReference>
<dbReference type="InterPro" id="IPR026179">
    <property type="entry name" value="Slain"/>
</dbReference>
<dbReference type="PANTHER" id="PTHR22406">
    <property type="entry name" value="NASCENT POLYPEPTIDE-ASSOCIATED COMPLEX SUBUNIT ALPHA, MUSCLE-SPECIFIC FORM"/>
    <property type="match status" value="1"/>
</dbReference>
<dbReference type="PANTHER" id="PTHR22406:SF2">
    <property type="entry name" value="SLAIN MOTIF-CONTAINING PROTEIN 1"/>
    <property type="match status" value="1"/>
</dbReference>
<dbReference type="Pfam" id="PF15301">
    <property type="entry name" value="SLAIN"/>
    <property type="match status" value="2"/>
</dbReference>
<proteinExistence type="evidence at protein level"/>
<comment type="function">
    <text evidence="6">Microtubule plus-end tracking protein that might be involved in the regulation of cytoplasmic microtubule dynamics, microtubule organization and microtubule elongation.</text>
</comment>
<comment type="subunit">
    <text evidence="1 6">Interacts with MAPRE1, MAPRE2, MAPRE3 and CKAP5 (PubMed:21646404). Interacts with ZDHHC17 (via ANK repeats) (By similarity).</text>
</comment>
<comment type="subcellular location">
    <subcellularLocation>
        <location evidence="6">Cytoplasm</location>
        <location evidence="6">Cytoskeleton</location>
    </subcellularLocation>
    <text evidence="6">Colocalizes with microtubules. Detected at the plus end of growing microtubules.</text>
</comment>
<comment type="alternative products">
    <event type="alternative splicing"/>
    <isoform>
        <id>Q68FF7-1</id>
        <name>1</name>
        <sequence type="displayed"/>
    </isoform>
    <isoform>
        <id>Q68FF7-2</id>
        <name>2</name>
        <sequence type="described" ref="VSP_030833"/>
    </isoform>
</comment>
<comment type="tissue specificity">
    <text evidence="4 5">Expressed in embryonic stem cells (PubMed:16546155). Expressed in adult bone marrow, brain, kidney, lung, testis and thymus (PubMed:16546155, PubMed:20563991). Expressed in colon (PubMed:20563991). Isoform 1 is highly expressed in brain (PubMed:20563991). Isoform 2 is more widely expressed in bone marrow, brain, colon, kidney, lung and thymus (PubMed:20563991).</text>
</comment>
<comment type="developmental stage">
    <text evidence="4 5">During embryonic stem cell differentiation, expression peaks at d2 and d3 (epiblast stage) (PubMed:16546155). In postimplantation embryos widely expressed throughout 6.5-7.0 dpc, followed by higher levels of expression in the headfold neurectoderm at 7.5 dpc (PubMed:16546155). At 8.5 dpc, observed in the neural tube and optic vesicles (PubMed:16546155). At 9.0-9.5 dpc, expressed at sites of imminent neural tube closure in the midbrain, hindbrain, and tailbud and in the dorsal aspects of the somites (PubMed:16546155). At 9.5 dpc, expressed within the neuroepithelium surrounding the telencephalic, mesencephalic and optic vesicles and in neural crest cells on either side of the mesencephalic vesicles, along the neural tube continuous with the tailbud, in the neural crest-derived dorsal root ganglia, in the surface ectoderm of the branchial arches as well as the primitive gut tube (PubMed:20563991). At 11.5 dpc, predominantly expressed within the forebrain, eye and neural tube, and weaker expression within the optic and oropharyngeal regions, in the epithelium of the olfactory pit, optic stalk and otic vesicle, parts of the gut tube, particularly within the lumen of the midgut loop and the stomach, in branchial arches and in the condensing mesenchyme of the developing limb buds (PubMed:20563991). At 11.5 dpc, also expressed within the neuroepithelium surrounding both the fourth and telencephalic ventricles (PubMed:20563991). At 13.5 dpc, expressed throughout the developing nervous system with most prominent expression in forebrain, midbrain and spinal cord, including the dorsal root ganglia and the olfactory bulb and within the endoderm derived midgut loop in the physiological umbilical hernia, as well as in the eye and in the main bronchi of the lung and within the developing metanephric tubules (PubMed:20563991). At 13.5 dpc, also expressed at the superficial layers of the neuroepithelium and the ependymal layers surrounding the fourth and lateral ventricles and in neurons of the dorsal root ganglia and in dorsal roots between the cartilage primordia as well as in cranial sensory ganglia (PubMed:20563991). Also expressed along the apical epidermal ridge and in the forelimb and hind limb (PubMed:20563991).</text>
</comment>
<comment type="similarity">
    <text evidence="8">Belongs to the SLAIN motif-containing family.</text>
</comment>